<feature type="chain" id="PRO_0000326737" description="Acylphosphatase">
    <location>
        <begin position="1"/>
        <end position="95"/>
    </location>
</feature>
<feature type="domain" description="Acylphosphatase-like" evidence="1">
    <location>
        <begin position="8"/>
        <end position="95"/>
    </location>
</feature>
<feature type="active site" evidence="1">
    <location>
        <position position="23"/>
    </location>
</feature>
<feature type="active site" evidence="1">
    <location>
        <position position="41"/>
    </location>
</feature>
<comment type="catalytic activity">
    <reaction>
        <text>an acyl phosphate + H2O = a carboxylate + phosphate + H(+)</text>
        <dbReference type="Rhea" id="RHEA:14965"/>
        <dbReference type="ChEBI" id="CHEBI:15377"/>
        <dbReference type="ChEBI" id="CHEBI:15378"/>
        <dbReference type="ChEBI" id="CHEBI:29067"/>
        <dbReference type="ChEBI" id="CHEBI:43474"/>
        <dbReference type="ChEBI" id="CHEBI:59918"/>
        <dbReference type="EC" id="3.6.1.7"/>
    </reaction>
</comment>
<comment type="similarity">
    <text evidence="2">Belongs to the acylphosphatase family.</text>
</comment>
<dbReference type="EC" id="3.6.1.7"/>
<dbReference type="EMBL" id="AE016823">
    <property type="protein sequence ID" value="AAS71723.1"/>
    <property type="molecule type" value="Genomic_DNA"/>
</dbReference>
<dbReference type="RefSeq" id="WP_000534971.1">
    <property type="nucleotide sequence ID" value="NC_005823.1"/>
</dbReference>
<dbReference type="SMR" id="Q72ML5"/>
<dbReference type="KEGG" id="lic:LIC_13178"/>
<dbReference type="HOGENOM" id="CLU_141932_2_1_12"/>
<dbReference type="Proteomes" id="UP000007037">
    <property type="component" value="Chromosome I"/>
</dbReference>
<dbReference type="GO" id="GO:0003998">
    <property type="term" value="F:acylphosphatase activity"/>
    <property type="evidence" value="ECO:0007669"/>
    <property type="project" value="UniProtKB-EC"/>
</dbReference>
<dbReference type="Gene3D" id="3.30.70.100">
    <property type="match status" value="1"/>
</dbReference>
<dbReference type="InterPro" id="IPR020456">
    <property type="entry name" value="Acylphosphatase"/>
</dbReference>
<dbReference type="InterPro" id="IPR001792">
    <property type="entry name" value="Acylphosphatase-like_dom"/>
</dbReference>
<dbReference type="InterPro" id="IPR036046">
    <property type="entry name" value="Acylphosphatase-like_dom_sf"/>
</dbReference>
<dbReference type="InterPro" id="IPR017968">
    <property type="entry name" value="Acylphosphatase_CS"/>
</dbReference>
<dbReference type="PANTHER" id="PTHR47268">
    <property type="entry name" value="ACYLPHOSPHATASE"/>
    <property type="match status" value="1"/>
</dbReference>
<dbReference type="PANTHER" id="PTHR47268:SF4">
    <property type="entry name" value="ACYLPHOSPHATASE"/>
    <property type="match status" value="1"/>
</dbReference>
<dbReference type="Pfam" id="PF00708">
    <property type="entry name" value="Acylphosphatase"/>
    <property type="match status" value="1"/>
</dbReference>
<dbReference type="SUPFAM" id="SSF54975">
    <property type="entry name" value="Acylphosphatase/BLUF domain-like"/>
    <property type="match status" value="1"/>
</dbReference>
<dbReference type="PROSITE" id="PS00150">
    <property type="entry name" value="ACYLPHOSPHATASE_1"/>
    <property type="match status" value="1"/>
</dbReference>
<dbReference type="PROSITE" id="PS51160">
    <property type="entry name" value="ACYLPHOSPHATASE_3"/>
    <property type="match status" value="1"/>
</dbReference>
<name>ACYP_LEPIC</name>
<protein>
    <recommendedName>
        <fullName>Acylphosphatase</fullName>
        <ecNumber>3.6.1.7</ecNumber>
    </recommendedName>
    <alternativeName>
        <fullName>Acylphosphate phosphohydrolase</fullName>
    </alternativeName>
</protein>
<reference key="1">
    <citation type="journal article" date="2004" name="J. Bacteriol.">
        <title>Comparative genomics of two Leptospira interrogans serovars reveals novel insights into physiology and pathogenesis.</title>
        <authorList>
            <person name="Nascimento A.L.T.O."/>
            <person name="Ko A.I."/>
            <person name="Martins E.A.L."/>
            <person name="Monteiro-Vitorello C.B."/>
            <person name="Ho P.L."/>
            <person name="Haake D.A."/>
            <person name="Verjovski-Almeida S."/>
            <person name="Hartskeerl R.A."/>
            <person name="Marques M.V."/>
            <person name="Oliveira M.C."/>
            <person name="Menck C.F.M."/>
            <person name="Leite L.C.C."/>
            <person name="Carrer H."/>
            <person name="Coutinho L.L."/>
            <person name="Degrave W.M."/>
            <person name="Dellagostin O.A."/>
            <person name="El-Dorry H."/>
            <person name="Ferro E.S."/>
            <person name="Ferro M.I.T."/>
            <person name="Furlan L.R."/>
            <person name="Gamberini M."/>
            <person name="Giglioti E.A."/>
            <person name="Goes-Neto A."/>
            <person name="Goldman G.H."/>
            <person name="Goldman M.H.S."/>
            <person name="Harakava R."/>
            <person name="Jeronimo S.M.B."/>
            <person name="Junqueira-de-Azevedo I.L.M."/>
            <person name="Kimura E.T."/>
            <person name="Kuramae E.E."/>
            <person name="Lemos E.G.M."/>
            <person name="Lemos M.V.F."/>
            <person name="Marino C.L."/>
            <person name="Nunes L.R."/>
            <person name="de Oliveira R.C."/>
            <person name="Pereira G.G."/>
            <person name="Reis M.S."/>
            <person name="Schriefer A."/>
            <person name="Siqueira W.J."/>
            <person name="Sommer P."/>
            <person name="Tsai S.M."/>
            <person name="Simpson A.J.G."/>
            <person name="Ferro J.A."/>
            <person name="Camargo L.E.A."/>
            <person name="Kitajima J.P."/>
            <person name="Setubal J.C."/>
            <person name="Van Sluys M.A."/>
        </authorList>
    </citation>
    <scope>NUCLEOTIDE SEQUENCE [LARGE SCALE GENOMIC DNA]</scope>
    <source>
        <strain>Fiocruz L1-130</strain>
    </source>
</reference>
<evidence type="ECO:0000255" key="1">
    <source>
        <dbReference type="PROSITE-ProRule" id="PRU00520"/>
    </source>
</evidence>
<evidence type="ECO:0000305" key="2"/>
<sequence length="95" mass="10826">MGSKNNSRAKILVRGKVQGVGFRYYILQRAQECRLSGYTQNLPGGEVETVVEGDKMFIEDLYRAIQRGPKGSEVKEALITWEDPKGNFRTFEIKK</sequence>
<gene>
    <name type="primary">acyP</name>
    <name type="ordered locus">LIC_13178</name>
</gene>
<organism>
    <name type="scientific">Leptospira interrogans serogroup Icterohaemorrhagiae serovar copenhageni (strain Fiocruz L1-130)</name>
    <dbReference type="NCBI Taxonomy" id="267671"/>
    <lineage>
        <taxon>Bacteria</taxon>
        <taxon>Pseudomonadati</taxon>
        <taxon>Spirochaetota</taxon>
        <taxon>Spirochaetia</taxon>
        <taxon>Leptospirales</taxon>
        <taxon>Leptospiraceae</taxon>
        <taxon>Leptospira</taxon>
    </lineage>
</organism>
<accession>Q72ML5</accession>
<proteinExistence type="inferred from homology"/>
<keyword id="KW-0378">Hydrolase</keyword>